<comment type="function">
    <text evidence="1">Putative NADP-dependent oxidoreductase.</text>
</comment>
<comment type="similarity">
    <text evidence="3">Belongs to the NAD(P)-dependent epimerase/dehydratase family. SDR39U1 subfamily.</text>
</comment>
<comment type="sequence caution" evidence="3">
    <conflict type="erroneous termination">
        <sequence resource="EMBL-CDS" id="AAH87941"/>
    </conflict>
    <text>Extended C-terminus.</text>
</comment>
<feature type="chain" id="PRO_0000279749" description="Epimerase family protein SDR39U1">
    <location>
        <begin position="1"/>
        <end position="293"/>
    </location>
</feature>
<feature type="binding site" evidence="2">
    <location>
        <begin position="31"/>
        <end position="32"/>
    </location>
    <ligand>
        <name>NADP(+)</name>
        <dbReference type="ChEBI" id="CHEBI:58349"/>
    </ligand>
</feature>
<feature type="binding site" evidence="2">
    <location>
        <begin position="58"/>
        <end position="59"/>
    </location>
    <ligand>
        <name>NADP(+)</name>
        <dbReference type="ChEBI" id="CHEBI:58349"/>
    </ligand>
</feature>
<feature type="binding site" evidence="2">
    <location>
        <position position="77"/>
    </location>
    <ligand>
        <name>NADP(+)</name>
        <dbReference type="ChEBI" id="CHEBI:58349"/>
    </ligand>
</feature>
<feature type="binding site" evidence="2">
    <location>
        <position position="82"/>
    </location>
    <ligand>
        <name>NADP(+)</name>
        <dbReference type="ChEBI" id="CHEBI:58349"/>
    </ligand>
</feature>
<feature type="binding site" evidence="2">
    <location>
        <position position="160"/>
    </location>
    <ligand>
        <name>NADP(+)</name>
        <dbReference type="ChEBI" id="CHEBI:58349"/>
    </ligand>
</feature>
<feature type="sequence conflict" description="In Ref. 1; BAE43214." evidence="3" ref="1">
    <original>F</original>
    <variation>S</variation>
    <location>
        <position position="132"/>
    </location>
</feature>
<proteinExistence type="evidence at protein level"/>
<gene>
    <name type="primary">Sdr39u1</name>
</gene>
<keyword id="KW-0521">NADP</keyword>
<keyword id="KW-0560">Oxidoreductase</keyword>
<keyword id="KW-1185">Reference proteome</keyword>
<dbReference type="EC" id="1.1.1.-"/>
<dbReference type="EMBL" id="AK009339">
    <property type="protein sequence ID" value="BAE43214.1"/>
    <property type="molecule type" value="mRNA"/>
</dbReference>
<dbReference type="EMBL" id="AK049709">
    <property type="protein sequence ID" value="BAC33886.1"/>
    <property type="molecule type" value="mRNA"/>
</dbReference>
<dbReference type="EMBL" id="BC087941">
    <property type="protein sequence ID" value="AAH87941.1"/>
    <property type="status" value="ALT_TERM"/>
    <property type="molecule type" value="mRNA"/>
</dbReference>
<dbReference type="CCDS" id="CCDS36935.1"/>
<dbReference type="RefSeq" id="NP_001076444.1">
    <property type="nucleotide sequence ID" value="NM_001082975.1"/>
</dbReference>
<dbReference type="SMR" id="Q5M8N4"/>
<dbReference type="FunCoup" id="Q5M8N4">
    <property type="interactions" value="515"/>
</dbReference>
<dbReference type="STRING" id="10090.ENSMUSP00000106957"/>
<dbReference type="GlyGen" id="Q5M8N4">
    <property type="glycosylation" value="1 site, 1 O-linked glycan (1 site)"/>
</dbReference>
<dbReference type="iPTMnet" id="Q5M8N4"/>
<dbReference type="PhosphoSitePlus" id="Q5M8N4"/>
<dbReference type="SwissPalm" id="Q5M8N4"/>
<dbReference type="jPOST" id="Q5M8N4"/>
<dbReference type="PaxDb" id="10090-ENSMUSP00000106957"/>
<dbReference type="PeptideAtlas" id="Q5M8N4"/>
<dbReference type="ProteomicsDB" id="279259"/>
<dbReference type="Antibodypedia" id="22920">
    <property type="antibodies" value="94 antibodies from 18 providers"/>
</dbReference>
<dbReference type="Ensembl" id="ENSMUST00000111325.5">
    <property type="protein sequence ID" value="ENSMUSP00000106957.4"/>
    <property type="gene ID" value="ENSMUSG00000022223.10"/>
</dbReference>
<dbReference type="GeneID" id="654795"/>
<dbReference type="KEGG" id="mmu:654795"/>
<dbReference type="UCSC" id="uc007ubc.1">
    <property type="organism name" value="mouse"/>
</dbReference>
<dbReference type="AGR" id="MGI:1916876"/>
<dbReference type="CTD" id="56948"/>
<dbReference type="MGI" id="MGI:1916876">
    <property type="gene designation" value="Sdr39u1"/>
</dbReference>
<dbReference type="VEuPathDB" id="HostDB:ENSMUSG00000022223"/>
<dbReference type="eggNOG" id="KOG3019">
    <property type="taxonomic scope" value="Eukaryota"/>
</dbReference>
<dbReference type="GeneTree" id="ENSGT00390000000337"/>
<dbReference type="HOGENOM" id="CLU_047373_0_1_1"/>
<dbReference type="InParanoid" id="Q5M8N4"/>
<dbReference type="OMA" id="YLPWIHI"/>
<dbReference type="OrthoDB" id="276721at2759"/>
<dbReference type="PhylomeDB" id="Q5M8N4"/>
<dbReference type="TreeFam" id="TF324783"/>
<dbReference type="BioGRID-ORCS" id="654795">
    <property type="hits" value="1 hit in 76 CRISPR screens"/>
</dbReference>
<dbReference type="ChiTaRS" id="Sdr39u1">
    <property type="organism name" value="mouse"/>
</dbReference>
<dbReference type="PRO" id="PR:Q5M8N4"/>
<dbReference type="Proteomes" id="UP000000589">
    <property type="component" value="Chromosome 14"/>
</dbReference>
<dbReference type="RNAct" id="Q5M8N4">
    <property type="molecule type" value="protein"/>
</dbReference>
<dbReference type="Bgee" id="ENSMUSG00000022223">
    <property type="expression patterns" value="Expressed in embryonic brain and 186 other cell types or tissues"/>
</dbReference>
<dbReference type="ExpressionAtlas" id="Q5M8N4">
    <property type="expression patterns" value="baseline and differential"/>
</dbReference>
<dbReference type="GO" id="GO:0016491">
    <property type="term" value="F:oxidoreductase activity"/>
    <property type="evidence" value="ECO:0007669"/>
    <property type="project" value="UniProtKB-KW"/>
</dbReference>
<dbReference type="CDD" id="cd05242">
    <property type="entry name" value="SDR_a8"/>
    <property type="match status" value="1"/>
</dbReference>
<dbReference type="Gene3D" id="3.40.50.720">
    <property type="entry name" value="NAD(P)-binding Rossmann-like Domain"/>
    <property type="match status" value="1"/>
</dbReference>
<dbReference type="InterPro" id="IPR013549">
    <property type="entry name" value="DUF1731"/>
</dbReference>
<dbReference type="InterPro" id="IPR001509">
    <property type="entry name" value="Epimerase_deHydtase"/>
</dbReference>
<dbReference type="InterPro" id="IPR036291">
    <property type="entry name" value="NAD(P)-bd_dom_sf"/>
</dbReference>
<dbReference type="InterPro" id="IPR010099">
    <property type="entry name" value="SDR39U1"/>
</dbReference>
<dbReference type="NCBIfam" id="TIGR01777">
    <property type="entry name" value="yfcH"/>
    <property type="match status" value="1"/>
</dbReference>
<dbReference type="PANTHER" id="PTHR11092:SF0">
    <property type="entry name" value="EPIMERASE FAMILY PROTEIN SDR39U1"/>
    <property type="match status" value="1"/>
</dbReference>
<dbReference type="PANTHER" id="PTHR11092">
    <property type="entry name" value="SUGAR NUCLEOTIDE EPIMERASE RELATED"/>
    <property type="match status" value="1"/>
</dbReference>
<dbReference type="Pfam" id="PF08338">
    <property type="entry name" value="DUF1731"/>
    <property type="match status" value="1"/>
</dbReference>
<dbReference type="Pfam" id="PF01370">
    <property type="entry name" value="Epimerase"/>
    <property type="match status" value="1"/>
</dbReference>
<dbReference type="SUPFAM" id="SSF51735">
    <property type="entry name" value="NAD(P)-binding Rossmann-fold domains"/>
    <property type="match status" value="1"/>
</dbReference>
<reference key="1">
    <citation type="journal article" date="2005" name="Science">
        <title>The transcriptional landscape of the mammalian genome.</title>
        <authorList>
            <person name="Carninci P."/>
            <person name="Kasukawa T."/>
            <person name="Katayama S."/>
            <person name="Gough J."/>
            <person name="Frith M.C."/>
            <person name="Maeda N."/>
            <person name="Oyama R."/>
            <person name="Ravasi T."/>
            <person name="Lenhard B."/>
            <person name="Wells C."/>
            <person name="Kodzius R."/>
            <person name="Shimokawa K."/>
            <person name="Bajic V.B."/>
            <person name="Brenner S.E."/>
            <person name="Batalov S."/>
            <person name="Forrest A.R."/>
            <person name="Zavolan M."/>
            <person name="Davis M.J."/>
            <person name="Wilming L.G."/>
            <person name="Aidinis V."/>
            <person name="Allen J.E."/>
            <person name="Ambesi-Impiombato A."/>
            <person name="Apweiler R."/>
            <person name="Aturaliya R.N."/>
            <person name="Bailey T.L."/>
            <person name="Bansal M."/>
            <person name="Baxter L."/>
            <person name="Beisel K.W."/>
            <person name="Bersano T."/>
            <person name="Bono H."/>
            <person name="Chalk A.M."/>
            <person name="Chiu K.P."/>
            <person name="Choudhary V."/>
            <person name="Christoffels A."/>
            <person name="Clutterbuck D.R."/>
            <person name="Crowe M.L."/>
            <person name="Dalla E."/>
            <person name="Dalrymple B.P."/>
            <person name="de Bono B."/>
            <person name="Della Gatta G."/>
            <person name="di Bernardo D."/>
            <person name="Down T."/>
            <person name="Engstrom P."/>
            <person name="Fagiolini M."/>
            <person name="Faulkner G."/>
            <person name="Fletcher C.F."/>
            <person name="Fukushima T."/>
            <person name="Furuno M."/>
            <person name="Futaki S."/>
            <person name="Gariboldi M."/>
            <person name="Georgii-Hemming P."/>
            <person name="Gingeras T.R."/>
            <person name="Gojobori T."/>
            <person name="Green R.E."/>
            <person name="Gustincich S."/>
            <person name="Harbers M."/>
            <person name="Hayashi Y."/>
            <person name="Hensch T.K."/>
            <person name="Hirokawa N."/>
            <person name="Hill D."/>
            <person name="Huminiecki L."/>
            <person name="Iacono M."/>
            <person name="Ikeo K."/>
            <person name="Iwama A."/>
            <person name="Ishikawa T."/>
            <person name="Jakt M."/>
            <person name="Kanapin A."/>
            <person name="Katoh M."/>
            <person name="Kawasawa Y."/>
            <person name="Kelso J."/>
            <person name="Kitamura H."/>
            <person name="Kitano H."/>
            <person name="Kollias G."/>
            <person name="Krishnan S.P."/>
            <person name="Kruger A."/>
            <person name="Kummerfeld S.K."/>
            <person name="Kurochkin I.V."/>
            <person name="Lareau L.F."/>
            <person name="Lazarevic D."/>
            <person name="Lipovich L."/>
            <person name="Liu J."/>
            <person name="Liuni S."/>
            <person name="McWilliam S."/>
            <person name="Madan Babu M."/>
            <person name="Madera M."/>
            <person name="Marchionni L."/>
            <person name="Matsuda H."/>
            <person name="Matsuzawa S."/>
            <person name="Miki H."/>
            <person name="Mignone F."/>
            <person name="Miyake S."/>
            <person name="Morris K."/>
            <person name="Mottagui-Tabar S."/>
            <person name="Mulder N."/>
            <person name="Nakano N."/>
            <person name="Nakauchi H."/>
            <person name="Ng P."/>
            <person name="Nilsson R."/>
            <person name="Nishiguchi S."/>
            <person name="Nishikawa S."/>
            <person name="Nori F."/>
            <person name="Ohara O."/>
            <person name="Okazaki Y."/>
            <person name="Orlando V."/>
            <person name="Pang K.C."/>
            <person name="Pavan W.J."/>
            <person name="Pavesi G."/>
            <person name="Pesole G."/>
            <person name="Petrovsky N."/>
            <person name="Piazza S."/>
            <person name="Reed J."/>
            <person name="Reid J.F."/>
            <person name="Ring B.Z."/>
            <person name="Ringwald M."/>
            <person name="Rost B."/>
            <person name="Ruan Y."/>
            <person name="Salzberg S.L."/>
            <person name="Sandelin A."/>
            <person name="Schneider C."/>
            <person name="Schoenbach C."/>
            <person name="Sekiguchi K."/>
            <person name="Semple C.A."/>
            <person name="Seno S."/>
            <person name="Sessa L."/>
            <person name="Sheng Y."/>
            <person name="Shibata Y."/>
            <person name="Shimada H."/>
            <person name="Shimada K."/>
            <person name="Silva D."/>
            <person name="Sinclair B."/>
            <person name="Sperling S."/>
            <person name="Stupka E."/>
            <person name="Sugiura K."/>
            <person name="Sultana R."/>
            <person name="Takenaka Y."/>
            <person name="Taki K."/>
            <person name="Tammoja K."/>
            <person name="Tan S.L."/>
            <person name="Tang S."/>
            <person name="Taylor M.S."/>
            <person name="Tegner J."/>
            <person name="Teichmann S.A."/>
            <person name="Ueda H.R."/>
            <person name="van Nimwegen E."/>
            <person name="Verardo R."/>
            <person name="Wei C.L."/>
            <person name="Yagi K."/>
            <person name="Yamanishi H."/>
            <person name="Zabarovsky E."/>
            <person name="Zhu S."/>
            <person name="Zimmer A."/>
            <person name="Hide W."/>
            <person name="Bult C."/>
            <person name="Grimmond S.M."/>
            <person name="Teasdale R.D."/>
            <person name="Liu E.T."/>
            <person name="Brusic V."/>
            <person name="Quackenbush J."/>
            <person name="Wahlestedt C."/>
            <person name="Mattick J.S."/>
            <person name="Hume D.A."/>
            <person name="Kai C."/>
            <person name="Sasaki D."/>
            <person name="Tomaru Y."/>
            <person name="Fukuda S."/>
            <person name="Kanamori-Katayama M."/>
            <person name="Suzuki M."/>
            <person name="Aoki J."/>
            <person name="Arakawa T."/>
            <person name="Iida J."/>
            <person name="Imamura K."/>
            <person name="Itoh M."/>
            <person name="Kato T."/>
            <person name="Kawaji H."/>
            <person name="Kawagashira N."/>
            <person name="Kawashima T."/>
            <person name="Kojima M."/>
            <person name="Kondo S."/>
            <person name="Konno H."/>
            <person name="Nakano K."/>
            <person name="Ninomiya N."/>
            <person name="Nishio T."/>
            <person name="Okada M."/>
            <person name="Plessy C."/>
            <person name="Shibata K."/>
            <person name="Shiraki T."/>
            <person name="Suzuki S."/>
            <person name="Tagami M."/>
            <person name="Waki K."/>
            <person name="Watahiki A."/>
            <person name="Okamura-Oho Y."/>
            <person name="Suzuki H."/>
            <person name="Kawai J."/>
            <person name="Hayashizaki Y."/>
        </authorList>
    </citation>
    <scope>NUCLEOTIDE SEQUENCE [LARGE SCALE MRNA]</scope>
    <source>
        <strain>C57BL/6J</strain>
        <tissue>Spinal cord</tissue>
        <tissue>Tongue</tissue>
    </source>
</reference>
<reference key="2">
    <citation type="journal article" date="2004" name="Genome Res.">
        <title>The status, quality, and expansion of the NIH full-length cDNA project: the Mammalian Gene Collection (MGC).</title>
        <authorList>
            <consortium name="The MGC Project Team"/>
        </authorList>
    </citation>
    <scope>NUCLEOTIDE SEQUENCE [LARGE SCALE MRNA]</scope>
    <source>
        <tissue>Kidney</tissue>
    </source>
</reference>
<reference key="3">
    <citation type="journal article" date="2010" name="Cell">
        <title>A tissue-specific atlas of mouse protein phosphorylation and expression.</title>
        <authorList>
            <person name="Huttlin E.L."/>
            <person name="Jedrychowski M.P."/>
            <person name="Elias J.E."/>
            <person name="Goswami T."/>
            <person name="Rad R."/>
            <person name="Beausoleil S.A."/>
            <person name="Villen J."/>
            <person name="Haas W."/>
            <person name="Sowa M.E."/>
            <person name="Gygi S.P."/>
        </authorList>
    </citation>
    <scope>IDENTIFICATION BY MASS SPECTROMETRY [LARGE SCALE ANALYSIS]</scope>
    <source>
        <tissue>Brain</tissue>
        <tissue>Brown adipose tissue</tissue>
        <tissue>Heart</tissue>
        <tissue>Kidney</tissue>
        <tissue>Liver</tissue>
        <tissue>Lung</tissue>
        <tissue>Pancreas</tissue>
        <tissue>Spleen</tissue>
        <tissue>Testis</tissue>
    </source>
</reference>
<name>D39U1_MOUSE</name>
<organism>
    <name type="scientific">Mus musculus</name>
    <name type="common">Mouse</name>
    <dbReference type="NCBI Taxonomy" id="10090"/>
    <lineage>
        <taxon>Eukaryota</taxon>
        <taxon>Metazoa</taxon>
        <taxon>Chordata</taxon>
        <taxon>Craniata</taxon>
        <taxon>Vertebrata</taxon>
        <taxon>Euteleostomi</taxon>
        <taxon>Mammalia</taxon>
        <taxon>Eutheria</taxon>
        <taxon>Euarchontoglires</taxon>
        <taxon>Glires</taxon>
        <taxon>Rodentia</taxon>
        <taxon>Myomorpha</taxon>
        <taxon>Muroidea</taxon>
        <taxon>Muridae</taxon>
        <taxon>Murinae</taxon>
        <taxon>Mus</taxon>
        <taxon>Mus</taxon>
    </lineage>
</organism>
<accession>Q5M8N4</accession>
<accession>Q3V467</accession>
<accession>Q8BWX0</accession>
<evidence type="ECO:0000250" key="1"/>
<evidence type="ECO:0000250" key="2">
    <source>
        <dbReference type="UniProtKB" id="Q9NRG7"/>
    </source>
</evidence>
<evidence type="ECO:0000305" key="3"/>
<sequence>MRVLVGGGTGFIGTAVTQLLRGRGHEVKLVSRQPGPGRITWSELSESGLPLCDVVINLAGENILNPLRRWNETFQKEVLTSRLDTTHLLAKAITETAHPPQAWILVTGVAYYQPSLTKEYDEDSPGGNFDFFSNLVTKWEAAARLPGESTRQVVVRSGVVLGRGGGAISHMLLPFRLGLGGPIGSGRQFFPWIHIGDLAGILNYALEANHVQGVLNGVAPASTTTNAEFAQALGAALGRPAFIPVPSTVVRAVFGERAIMLLEGQKVVPRRTLATGYQYSFPELRAALKDVVA</sequence>
<protein>
    <recommendedName>
        <fullName>Epimerase family protein SDR39U1</fullName>
        <ecNumber>1.1.1.-</ecNumber>
    </recommendedName>
    <alternativeName>
        <fullName evidence="2">Short-chain dehydrogenase/reductase family 39U member 1</fullName>
    </alternativeName>
</protein>